<reference key="1">
    <citation type="submission" date="2006-08" db="EMBL/GenBank/DDBJ databases">
        <title>Complete sequence of chromosome 1 of Burkholderia cenocepacia HI2424.</title>
        <authorList>
            <person name="Copeland A."/>
            <person name="Lucas S."/>
            <person name="Lapidus A."/>
            <person name="Barry K."/>
            <person name="Detter J.C."/>
            <person name="Glavina del Rio T."/>
            <person name="Hammon N."/>
            <person name="Israni S."/>
            <person name="Pitluck S."/>
            <person name="Chain P."/>
            <person name="Malfatti S."/>
            <person name="Shin M."/>
            <person name="Vergez L."/>
            <person name="Schmutz J."/>
            <person name="Larimer F."/>
            <person name="Land M."/>
            <person name="Hauser L."/>
            <person name="Kyrpides N."/>
            <person name="Kim E."/>
            <person name="LiPuma J.J."/>
            <person name="Gonzalez C.F."/>
            <person name="Konstantinidis K."/>
            <person name="Tiedje J.M."/>
            <person name="Richardson P."/>
        </authorList>
    </citation>
    <scope>NUCLEOTIDE SEQUENCE [LARGE SCALE GENOMIC DNA]</scope>
    <source>
        <strain>HI2424</strain>
    </source>
</reference>
<sequence length="448" mass="49841">MANVVENLGKLERRVTISLPKDTVQKEIDARIQKLAKTVRMPGFRPGKVPLKMVAQQYAGQVEAEVLSDKIGQEFFTVSRAENLRVAGQPSFEPKQEQAEDAYAFDATFEVYPEVKIGDLATAEVERSTTSIGDAEIDRTLDILRKQRVHYHARGEAGEHGDGGADTAAKNGDRVTVDFVGKIEDVAFQGGTAEDFPFVLGEGRMLPEFETAALGLKVGEQRTFDLKFPDDYHGKDVAGKTAQFTVTMKKIEWPHLPEIDAEFAKSLGIEDGDLTKMRAEIKENLEREAKRRTQSIVKNQVMDALLKISELDVPKALIEQDQQRLVEMARQDLAQRGVPNAKDAPIPAEMFAEQAERRVKLGLVLAELVKANGLEAKPEQIRAEVDEFAKSYEDPKEVVRWYYSNQQRLAEMEAFVVESNVVDFVLGKAKVTDKEVSFEALASASAQA</sequence>
<feature type="chain" id="PRO_1000022651" description="Trigger factor">
    <location>
        <begin position="1"/>
        <end position="448"/>
    </location>
</feature>
<feature type="domain" description="PPIase FKBP-type" evidence="1">
    <location>
        <begin position="172"/>
        <end position="257"/>
    </location>
</feature>
<organism>
    <name type="scientific">Burkholderia cenocepacia (strain HI2424)</name>
    <dbReference type="NCBI Taxonomy" id="331272"/>
    <lineage>
        <taxon>Bacteria</taxon>
        <taxon>Pseudomonadati</taxon>
        <taxon>Pseudomonadota</taxon>
        <taxon>Betaproteobacteria</taxon>
        <taxon>Burkholderiales</taxon>
        <taxon>Burkholderiaceae</taxon>
        <taxon>Burkholderia</taxon>
        <taxon>Burkholderia cepacia complex</taxon>
    </lineage>
</organism>
<evidence type="ECO:0000255" key="1">
    <source>
        <dbReference type="HAMAP-Rule" id="MF_00303"/>
    </source>
</evidence>
<dbReference type="EC" id="5.2.1.8" evidence="1"/>
<dbReference type="EMBL" id="CP000458">
    <property type="protein sequence ID" value="ABK08675.1"/>
    <property type="molecule type" value="Genomic_DNA"/>
</dbReference>
<dbReference type="RefSeq" id="WP_011549609.1">
    <property type="nucleotide sequence ID" value="NC_008542.1"/>
</dbReference>
<dbReference type="SMR" id="A0K848"/>
<dbReference type="KEGG" id="bch:Bcen2424_1924"/>
<dbReference type="HOGENOM" id="CLU_033058_2_0_4"/>
<dbReference type="GO" id="GO:0005737">
    <property type="term" value="C:cytoplasm"/>
    <property type="evidence" value="ECO:0007669"/>
    <property type="project" value="UniProtKB-SubCell"/>
</dbReference>
<dbReference type="GO" id="GO:0003755">
    <property type="term" value="F:peptidyl-prolyl cis-trans isomerase activity"/>
    <property type="evidence" value="ECO:0007669"/>
    <property type="project" value="UniProtKB-UniRule"/>
</dbReference>
<dbReference type="GO" id="GO:0044183">
    <property type="term" value="F:protein folding chaperone"/>
    <property type="evidence" value="ECO:0007669"/>
    <property type="project" value="TreeGrafter"/>
</dbReference>
<dbReference type="GO" id="GO:0043022">
    <property type="term" value="F:ribosome binding"/>
    <property type="evidence" value="ECO:0007669"/>
    <property type="project" value="TreeGrafter"/>
</dbReference>
<dbReference type="GO" id="GO:0051083">
    <property type="term" value="P:'de novo' cotranslational protein folding"/>
    <property type="evidence" value="ECO:0007669"/>
    <property type="project" value="TreeGrafter"/>
</dbReference>
<dbReference type="GO" id="GO:0051301">
    <property type="term" value="P:cell division"/>
    <property type="evidence" value="ECO:0007669"/>
    <property type="project" value="UniProtKB-KW"/>
</dbReference>
<dbReference type="GO" id="GO:0061077">
    <property type="term" value="P:chaperone-mediated protein folding"/>
    <property type="evidence" value="ECO:0007669"/>
    <property type="project" value="TreeGrafter"/>
</dbReference>
<dbReference type="GO" id="GO:0015031">
    <property type="term" value="P:protein transport"/>
    <property type="evidence" value="ECO:0007669"/>
    <property type="project" value="UniProtKB-UniRule"/>
</dbReference>
<dbReference type="GO" id="GO:0043335">
    <property type="term" value="P:protein unfolding"/>
    <property type="evidence" value="ECO:0007669"/>
    <property type="project" value="TreeGrafter"/>
</dbReference>
<dbReference type="FunFam" id="3.10.50.40:FF:000001">
    <property type="entry name" value="Trigger factor"/>
    <property type="match status" value="1"/>
</dbReference>
<dbReference type="Gene3D" id="3.10.50.40">
    <property type="match status" value="1"/>
</dbReference>
<dbReference type="Gene3D" id="3.30.70.1050">
    <property type="entry name" value="Trigger factor ribosome-binding domain"/>
    <property type="match status" value="1"/>
</dbReference>
<dbReference type="Gene3D" id="1.10.3120.10">
    <property type="entry name" value="Trigger factor, C-terminal domain"/>
    <property type="match status" value="1"/>
</dbReference>
<dbReference type="HAMAP" id="MF_00303">
    <property type="entry name" value="Trigger_factor_Tig"/>
    <property type="match status" value="1"/>
</dbReference>
<dbReference type="InterPro" id="IPR046357">
    <property type="entry name" value="PPIase_dom_sf"/>
</dbReference>
<dbReference type="InterPro" id="IPR001179">
    <property type="entry name" value="PPIase_FKBP_dom"/>
</dbReference>
<dbReference type="InterPro" id="IPR005215">
    <property type="entry name" value="Trig_fac"/>
</dbReference>
<dbReference type="InterPro" id="IPR008880">
    <property type="entry name" value="Trigger_fac_C"/>
</dbReference>
<dbReference type="InterPro" id="IPR037041">
    <property type="entry name" value="Trigger_fac_C_sf"/>
</dbReference>
<dbReference type="InterPro" id="IPR008881">
    <property type="entry name" value="Trigger_fac_ribosome-bd_bac"/>
</dbReference>
<dbReference type="InterPro" id="IPR036611">
    <property type="entry name" value="Trigger_fac_ribosome-bd_sf"/>
</dbReference>
<dbReference type="InterPro" id="IPR027304">
    <property type="entry name" value="Trigger_fact/SurA_dom_sf"/>
</dbReference>
<dbReference type="NCBIfam" id="TIGR00115">
    <property type="entry name" value="tig"/>
    <property type="match status" value="1"/>
</dbReference>
<dbReference type="PANTHER" id="PTHR30560">
    <property type="entry name" value="TRIGGER FACTOR CHAPERONE AND PEPTIDYL-PROLYL CIS/TRANS ISOMERASE"/>
    <property type="match status" value="1"/>
</dbReference>
<dbReference type="PANTHER" id="PTHR30560:SF3">
    <property type="entry name" value="TRIGGER FACTOR-LIKE PROTEIN TIG, CHLOROPLASTIC"/>
    <property type="match status" value="1"/>
</dbReference>
<dbReference type="Pfam" id="PF00254">
    <property type="entry name" value="FKBP_C"/>
    <property type="match status" value="1"/>
</dbReference>
<dbReference type="Pfam" id="PF05698">
    <property type="entry name" value="Trigger_C"/>
    <property type="match status" value="1"/>
</dbReference>
<dbReference type="Pfam" id="PF05697">
    <property type="entry name" value="Trigger_N"/>
    <property type="match status" value="1"/>
</dbReference>
<dbReference type="PIRSF" id="PIRSF003095">
    <property type="entry name" value="Trigger_factor"/>
    <property type="match status" value="1"/>
</dbReference>
<dbReference type="SUPFAM" id="SSF54534">
    <property type="entry name" value="FKBP-like"/>
    <property type="match status" value="1"/>
</dbReference>
<dbReference type="SUPFAM" id="SSF109998">
    <property type="entry name" value="Triger factor/SurA peptide-binding domain-like"/>
    <property type="match status" value="1"/>
</dbReference>
<dbReference type="SUPFAM" id="SSF102735">
    <property type="entry name" value="Trigger factor ribosome-binding domain"/>
    <property type="match status" value="1"/>
</dbReference>
<dbReference type="PROSITE" id="PS50059">
    <property type="entry name" value="FKBP_PPIASE"/>
    <property type="match status" value="1"/>
</dbReference>
<protein>
    <recommendedName>
        <fullName evidence="1">Trigger factor</fullName>
        <shortName evidence="1">TF</shortName>
        <ecNumber evidence="1">5.2.1.8</ecNumber>
    </recommendedName>
    <alternativeName>
        <fullName evidence="1">PPIase</fullName>
    </alternativeName>
</protein>
<gene>
    <name evidence="1" type="primary">tig</name>
    <name type="ordered locus">Bcen2424_1924</name>
</gene>
<accession>A0K848</accession>
<name>TIG_BURCH</name>
<comment type="function">
    <text evidence="1">Involved in protein export. Acts as a chaperone by maintaining the newly synthesized protein in an open conformation. Functions as a peptidyl-prolyl cis-trans isomerase.</text>
</comment>
<comment type="catalytic activity">
    <reaction evidence="1">
        <text>[protein]-peptidylproline (omega=180) = [protein]-peptidylproline (omega=0)</text>
        <dbReference type="Rhea" id="RHEA:16237"/>
        <dbReference type="Rhea" id="RHEA-COMP:10747"/>
        <dbReference type="Rhea" id="RHEA-COMP:10748"/>
        <dbReference type="ChEBI" id="CHEBI:83833"/>
        <dbReference type="ChEBI" id="CHEBI:83834"/>
        <dbReference type="EC" id="5.2.1.8"/>
    </reaction>
</comment>
<comment type="subcellular location">
    <subcellularLocation>
        <location>Cytoplasm</location>
    </subcellularLocation>
    <text evidence="1">About half TF is bound to the ribosome near the polypeptide exit tunnel while the other half is free in the cytoplasm.</text>
</comment>
<comment type="domain">
    <text evidence="1">Consists of 3 domains; the N-terminus binds the ribosome, the middle domain has PPIase activity, while the C-terminus has intrinsic chaperone activity on its own.</text>
</comment>
<comment type="similarity">
    <text evidence="1">Belongs to the FKBP-type PPIase family. Tig subfamily.</text>
</comment>
<proteinExistence type="inferred from homology"/>
<keyword id="KW-0131">Cell cycle</keyword>
<keyword id="KW-0132">Cell division</keyword>
<keyword id="KW-0143">Chaperone</keyword>
<keyword id="KW-0963">Cytoplasm</keyword>
<keyword id="KW-0413">Isomerase</keyword>
<keyword id="KW-0697">Rotamase</keyword>